<feature type="chain" id="PRO_0000192842" description="Casein kinase I isoform gamma-2">
    <location>
        <begin position="1"/>
        <end position="415"/>
    </location>
</feature>
<feature type="domain" description="Protein kinase" evidence="4">
    <location>
        <begin position="46"/>
        <end position="316"/>
    </location>
</feature>
<feature type="region of interest" description="Disordered" evidence="6">
    <location>
        <begin position="1"/>
        <end position="36"/>
    </location>
</feature>
<feature type="region of interest" description="Disordered" evidence="6">
    <location>
        <begin position="340"/>
        <end position="383"/>
    </location>
</feature>
<feature type="region of interest" description="Phospho-regulated basic and hydrophobic (PRBH) motif" evidence="12">
    <location>
        <begin position="369"/>
        <end position="415"/>
    </location>
</feature>
<feature type="compositionally biased region" description="Basic and acidic residues" evidence="6">
    <location>
        <begin position="1"/>
        <end position="17"/>
    </location>
</feature>
<feature type="compositionally biased region" description="Low complexity" evidence="6">
    <location>
        <begin position="27"/>
        <end position="36"/>
    </location>
</feature>
<feature type="compositionally biased region" description="Polar residues" evidence="6">
    <location>
        <begin position="358"/>
        <end position="370"/>
    </location>
</feature>
<feature type="active site" description="Proton acceptor" evidence="4 5">
    <location>
        <position position="165"/>
    </location>
</feature>
<feature type="binding site" evidence="4">
    <location>
        <begin position="52"/>
        <end position="60"/>
    </location>
    <ligand>
        <name>ATP</name>
        <dbReference type="ChEBI" id="CHEBI:30616"/>
    </ligand>
</feature>
<feature type="binding site" evidence="4">
    <location>
        <position position="75"/>
    </location>
    <ligand>
        <name>ATP</name>
        <dbReference type="ChEBI" id="CHEBI:30616"/>
    </ligand>
</feature>
<feature type="sequence variant" id="VAR_042086" description="In dbSNP:rs55702630." evidence="9">
    <original>F</original>
    <variation>L</variation>
    <location>
        <position position="189"/>
    </location>
</feature>
<feature type="sequence variant" id="VAR_042087" description="In dbSNP:rs55780547." evidence="9">
    <original>E</original>
    <variation>G</variation>
    <location>
        <position position="194"/>
    </location>
</feature>
<feature type="sequence variant" id="VAR_042088" description="In dbSNP:rs55923222." evidence="9">
    <original>I</original>
    <variation>T</variation>
    <location>
        <position position="196"/>
    </location>
</feature>
<feature type="sequence variant" id="VAR_042089" description="In dbSNP:rs56264133." evidence="9">
    <original>Y</original>
    <variation>C</variation>
    <location>
        <position position="206"/>
    </location>
</feature>
<feature type="sequence variant" id="VAR_042090" description="In dbSNP:rs56108438." evidence="9">
    <original>Y</original>
    <variation>H</variation>
    <location>
        <position position="206"/>
    </location>
</feature>
<feature type="sequence variant" id="VAR_042091" description="In dbSNP:rs56340103." evidence="9">
    <original>R</original>
    <variation>S</variation>
    <location>
        <position position="207"/>
    </location>
</feature>
<feature type="sequence variant" id="VAR_042092" description="In dbSNP:rs55818316." evidence="9">
    <original>E</original>
    <variation>Q</variation>
    <location>
        <position position="208"/>
    </location>
</feature>
<feature type="sequence variant" id="VAR_042093" description="In dbSNP:rs55754218." evidence="9">
    <original>R</original>
    <variation>C</variation>
    <location>
        <position position="217"/>
    </location>
</feature>
<feature type="sequence variant" id="VAR_042094" description="In dbSNP:rs56038081." evidence="9">
    <original>T</original>
    <variation>M</variation>
    <location>
        <position position="223"/>
    </location>
</feature>
<feature type="sequence conflict" description="In Ref. 2; AAP88924 and 6; AAH20972." evidence="15" ref="2 6">
    <original>K</original>
    <variation>N</variation>
    <location>
        <position position="113"/>
    </location>
</feature>
<feature type="strand" evidence="16">
    <location>
        <begin position="46"/>
        <end position="51"/>
    </location>
</feature>
<feature type="strand" evidence="16">
    <location>
        <begin position="60"/>
        <end position="65"/>
    </location>
</feature>
<feature type="turn" evidence="16">
    <location>
        <begin position="66"/>
        <end position="68"/>
    </location>
</feature>
<feature type="strand" evidence="16">
    <location>
        <begin position="71"/>
        <end position="78"/>
    </location>
</feature>
<feature type="helix" evidence="16">
    <location>
        <begin position="86"/>
        <end position="95"/>
    </location>
</feature>
<feature type="turn" evidence="16">
    <location>
        <begin position="96"/>
        <end position="98"/>
    </location>
</feature>
<feature type="strand" evidence="16">
    <location>
        <begin position="105"/>
        <end position="111"/>
    </location>
</feature>
<feature type="strand" evidence="16">
    <location>
        <begin position="114"/>
        <end position="120"/>
    </location>
</feature>
<feature type="helix" evidence="16">
    <location>
        <begin position="126"/>
        <end position="132"/>
    </location>
</feature>
<feature type="turn" evidence="16">
    <location>
        <begin position="133"/>
        <end position="135"/>
    </location>
</feature>
<feature type="helix" evidence="16">
    <location>
        <begin position="139"/>
        <end position="158"/>
    </location>
</feature>
<feature type="helix" evidence="16">
    <location>
        <begin position="168"/>
        <end position="170"/>
    </location>
</feature>
<feature type="strand" evidence="16">
    <location>
        <begin position="171"/>
        <end position="173"/>
    </location>
</feature>
<feature type="turn" evidence="16">
    <location>
        <begin position="179"/>
        <end position="182"/>
    </location>
</feature>
<feature type="strand" evidence="16">
    <location>
        <begin position="183"/>
        <end position="186"/>
    </location>
</feature>
<feature type="strand" evidence="16">
    <location>
        <begin position="193"/>
        <end position="196"/>
    </location>
</feature>
<feature type="turn" evidence="16">
    <location>
        <begin position="198"/>
        <end position="200"/>
    </location>
</feature>
<feature type="turn" evidence="16">
    <location>
        <begin position="216"/>
        <end position="218"/>
    </location>
</feature>
<feature type="helix" evidence="16">
    <location>
        <begin position="221"/>
        <end position="224"/>
    </location>
</feature>
<feature type="helix" evidence="16">
    <location>
        <begin position="231"/>
        <end position="247"/>
    </location>
</feature>
<feature type="turn" evidence="16">
    <location>
        <begin position="251"/>
        <end position="254"/>
    </location>
</feature>
<feature type="strand" evidence="16">
    <location>
        <begin position="257"/>
        <end position="259"/>
    </location>
</feature>
<feature type="helix" evidence="16">
    <location>
        <begin position="260"/>
        <end position="272"/>
    </location>
</feature>
<feature type="helix" evidence="16">
    <location>
        <begin position="276"/>
        <end position="279"/>
    </location>
</feature>
<feature type="turn" evidence="16">
    <location>
        <begin position="280"/>
        <end position="282"/>
    </location>
</feature>
<feature type="helix" evidence="16">
    <location>
        <begin position="285"/>
        <end position="295"/>
    </location>
</feature>
<feature type="helix" evidence="16">
    <location>
        <begin position="305"/>
        <end position="318"/>
    </location>
</feature>
<feature type="turn" evidence="16">
    <location>
        <begin position="328"/>
        <end position="331"/>
    </location>
</feature>
<proteinExistence type="evidence at protein level"/>
<gene>
    <name type="primary">CSNK1G2</name>
    <name type="synonym">CK1G2</name>
</gene>
<comment type="function">
    <text evidence="1 3 7 8 10 11 13">Serine/threonine-protein kinase. Casein kinases are operationally defined by their preferential utilization of acidic proteins such as caseins as substrates. It can phosphorylate a large number of proteins. Participates in Wnt signaling (By similarity). Phosphorylates COL4A3BP/CERT, MTA1 and SMAD3. SMAD3 phosphorylation promotes its ligand-dependent ubiquitination and subsequent proteasome degradation, thus inhibiting SMAD3-mediated TGF-beta responses. Hyperphosphorylation of the serine-repeat motif of COL4A3BP/CERT leads to its inactivation by dissociation from the Golgi complex, thus down-regulating ER-to-Golgi transport of ceramide and sphingomyelin synthesis. Triggers PER1 proteasomal degradation probably through phosphorylation (PubMed:15077195, PubMed:15917222, PubMed:18794808, PubMed:19005213). Involved in brain development and vesicular trafficking and neurotransmitter releasing from small synaptic vesicles. Regulates fast synaptic transmission mediated by glutamate (By similarity). Involved in regulation of reactive oxygen species (ROS) levels (PubMed:37099597).</text>
</comment>
<comment type="catalytic activity">
    <reaction>
        <text>L-seryl-[protein] + ATP = O-phospho-L-seryl-[protein] + ADP + H(+)</text>
        <dbReference type="Rhea" id="RHEA:17989"/>
        <dbReference type="Rhea" id="RHEA-COMP:9863"/>
        <dbReference type="Rhea" id="RHEA-COMP:11604"/>
        <dbReference type="ChEBI" id="CHEBI:15378"/>
        <dbReference type="ChEBI" id="CHEBI:29999"/>
        <dbReference type="ChEBI" id="CHEBI:30616"/>
        <dbReference type="ChEBI" id="CHEBI:83421"/>
        <dbReference type="ChEBI" id="CHEBI:456216"/>
        <dbReference type="EC" id="2.7.11.1"/>
    </reaction>
</comment>
<comment type="catalytic activity">
    <reaction>
        <text>L-threonyl-[protein] + ATP = O-phospho-L-threonyl-[protein] + ADP + H(+)</text>
        <dbReference type="Rhea" id="RHEA:46608"/>
        <dbReference type="Rhea" id="RHEA-COMP:11060"/>
        <dbReference type="Rhea" id="RHEA-COMP:11605"/>
        <dbReference type="ChEBI" id="CHEBI:15378"/>
        <dbReference type="ChEBI" id="CHEBI:30013"/>
        <dbReference type="ChEBI" id="CHEBI:30616"/>
        <dbReference type="ChEBI" id="CHEBI:61977"/>
        <dbReference type="ChEBI" id="CHEBI:456216"/>
        <dbReference type="EC" id="2.7.11.1"/>
    </reaction>
</comment>
<comment type="activity regulation">
    <text evidence="7">Stimulated by estrogen. Repressed by 5-iodotubercidin (DB04604).</text>
</comment>
<comment type="subunit">
    <text evidence="2 7 10 13">Monomer (By similarity). Interacts with MTA1 (short isoform) in the cytoplasm (PubMed:15077195). Interacts with SMAD3 (PubMed:18794808). Interacts with DUOXA2 (PubMed:37099597).</text>
</comment>
<comment type="interaction">
    <interactant intactId="EBI-748380">
        <id>P78368</id>
    </interactant>
    <interactant intactId="EBI-743771">
        <id>Q92624</id>
        <label>APPBP2</label>
    </interactant>
    <organismsDiffer>false</organismsDiffer>
    <experiments>3</experiments>
</comment>
<comment type="interaction">
    <interactant intactId="EBI-748380">
        <id>P78368</id>
    </interactant>
    <interactant intactId="EBI-739994">
        <id>Q9Y5P4</id>
        <label>CERT1</label>
    </interactant>
    <organismsDiffer>false</organismsDiffer>
    <experiments>6</experiments>
</comment>
<comment type="interaction">
    <interactant intactId="EBI-748380">
        <id>P78368</id>
    </interactant>
    <interactant intactId="EBI-11156432">
        <id>Q9Y5P4-2</id>
        <label>CERT1</label>
    </interactant>
    <organismsDiffer>false</organismsDiffer>
    <experiments>4</experiments>
</comment>
<comment type="interaction">
    <interactant intactId="EBI-748380">
        <id>P78368</id>
    </interactant>
    <interactant intactId="EBI-1383814">
        <id>Q9HCP0</id>
        <label>CSNK1G1</label>
    </interactant>
    <organismsDiffer>false</organismsDiffer>
    <experiments>3</experiments>
</comment>
<comment type="interaction">
    <interactant intactId="EBI-748380">
        <id>P78368</id>
    </interactant>
    <interactant intactId="EBI-10172290">
        <id>P60409</id>
        <label>KRTAP10-7</label>
    </interactant>
    <organismsDiffer>false</organismsDiffer>
    <experiments>3</experiments>
</comment>
<comment type="subcellular location">
    <subcellularLocation>
        <location evidence="12">Cytoplasm</location>
        <location evidence="12">Cell cortex</location>
    </subcellularLocation>
    <subcellularLocation>
        <location evidence="7 12">Cytoplasm</location>
    </subcellularLocation>
</comment>
<comment type="tissue specificity">
    <text evidence="14">Testis.</text>
</comment>
<comment type="domain">
    <text evidence="12">The phospho-regulated basic and hydrophobic (PRBH) motif is sufficient and important for interaction with phospholipids permitting cortical localization (PubMed:26481050). Phosphorylation of the PRBH motif by aPKC inhibits the association of the protein with the cortical membrane (PubMed:26481050).</text>
</comment>
<comment type="PTM">
    <text evidence="10 12">Autophosphorylated (PubMed:18794808). Phosphorylated by aPKC which promotes dissociation from the cell cortex (PubMed:26481050).</text>
</comment>
<comment type="similarity">
    <text evidence="15">Belongs to the protein kinase superfamily. CK1 Ser/Thr protein kinase family. Casein kinase I subfamily.</text>
</comment>
<dbReference type="EC" id="2.7.11.1"/>
<dbReference type="EMBL" id="U89896">
    <property type="protein sequence ID" value="AAB88627.1"/>
    <property type="molecule type" value="mRNA"/>
</dbReference>
<dbReference type="EMBL" id="BT009922">
    <property type="protein sequence ID" value="AAP88924.1"/>
    <property type="molecule type" value="mRNA"/>
</dbReference>
<dbReference type="EMBL" id="AF001177">
    <property type="protein sequence ID" value="AAC00212.1"/>
    <property type="molecule type" value="Transcribed_RNA"/>
</dbReference>
<dbReference type="EMBL" id="AB451278">
    <property type="protein sequence ID" value="BAG70092.1"/>
    <property type="molecule type" value="mRNA"/>
</dbReference>
<dbReference type="EMBL" id="AB451410">
    <property type="protein sequence ID" value="BAG70224.1"/>
    <property type="molecule type" value="mRNA"/>
</dbReference>
<dbReference type="EMBL" id="AC005306">
    <property type="protein sequence ID" value="AAC26983.1"/>
    <property type="molecule type" value="Genomic_DNA"/>
</dbReference>
<dbReference type="EMBL" id="CH471139">
    <property type="protein sequence ID" value="EAW69430.1"/>
    <property type="molecule type" value="Genomic_DNA"/>
</dbReference>
<dbReference type="EMBL" id="BC018693">
    <property type="protein sequence ID" value="AAH18693.1"/>
    <property type="molecule type" value="mRNA"/>
</dbReference>
<dbReference type="EMBL" id="BC018699">
    <property type="protein sequence ID" value="AAH18699.1"/>
    <property type="molecule type" value="mRNA"/>
</dbReference>
<dbReference type="EMBL" id="BC020972">
    <property type="protein sequence ID" value="AAH20972.1"/>
    <property type="molecule type" value="mRNA"/>
</dbReference>
<dbReference type="CCDS" id="CCDS12077.1"/>
<dbReference type="RefSeq" id="NP_001310.3">
    <property type="nucleotide sequence ID" value="NM_001319.6"/>
</dbReference>
<dbReference type="RefSeq" id="XP_047294141.1">
    <property type="nucleotide sequence ID" value="XM_047438185.1"/>
</dbReference>
<dbReference type="RefSeq" id="XP_054175818.1">
    <property type="nucleotide sequence ID" value="XM_054319843.1"/>
</dbReference>
<dbReference type="PDB" id="2C47">
    <property type="method" value="X-ray"/>
    <property type="resolution" value="2.40 A"/>
    <property type="chains" value="A/B/C/D=43-353"/>
</dbReference>
<dbReference type="PDBsum" id="2C47"/>
<dbReference type="SMR" id="P78368"/>
<dbReference type="BioGRID" id="107839">
    <property type="interactions" value="131"/>
</dbReference>
<dbReference type="FunCoup" id="P78368">
    <property type="interactions" value="2822"/>
</dbReference>
<dbReference type="IntAct" id="P78368">
    <property type="interactions" value="91"/>
</dbReference>
<dbReference type="MINT" id="P78368"/>
<dbReference type="STRING" id="9606.ENSP00000255641"/>
<dbReference type="BindingDB" id="P78368"/>
<dbReference type="ChEMBL" id="CHEMBL2543"/>
<dbReference type="DrugBank" id="DB04604">
    <property type="generic name" value="5-iodotubercidin"/>
</dbReference>
<dbReference type="DrugBank" id="DB03083">
    <property type="generic name" value="IC261"/>
</dbReference>
<dbReference type="DrugBank" id="DB03693">
    <property type="generic name" value="N-(2-Aminoethyl)-5-Chloroisoquinoline-8-Sulfonamide"/>
</dbReference>
<dbReference type="DrugCentral" id="P78368"/>
<dbReference type="GuidetoPHARMACOLOGY" id="2000"/>
<dbReference type="iPTMnet" id="P78368"/>
<dbReference type="PhosphoSitePlus" id="P78368"/>
<dbReference type="SwissPalm" id="P78368"/>
<dbReference type="BioMuta" id="CSNK1G2"/>
<dbReference type="DMDM" id="3024060"/>
<dbReference type="jPOST" id="P78368"/>
<dbReference type="MassIVE" id="P78368"/>
<dbReference type="PaxDb" id="9606-ENSP00000255641"/>
<dbReference type="PeptideAtlas" id="P78368"/>
<dbReference type="ProteomicsDB" id="57596"/>
<dbReference type="Pumba" id="P78368"/>
<dbReference type="Antibodypedia" id="22865">
    <property type="antibodies" value="487 antibodies from 31 providers"/>
</dbReference>
<dbReference type="DNASU" id="1455"/>
<dbReference type="Ensembl" id="ENST00000255641.13">
    <property type="protein sequence ID" value="ENSP00000255641.7"/>
    <property type="gene ID" value="ENSG00000133275.16"/>
</dbReference>
<dbReference type="GeneID" id="1455"/>
<dbReference type="KEGG" id="hsa:1455"/>
<dbReference type="MANE-Select" id="ENST00000255641.13">
    <property type="protein sequence ID" value="ENSP00000255641.7"/>
    <property type="RefSeq nucleotide sequence ID" value="NM_001319.7"/>
    <property type="RefSeq protein sequence ID" value="NP_001310.3"/>
</dbReference>
<dbReference type="UCSC" id="uc002lul.5">
    <property type="organism name" value="human"/>
</dbReference>
<dbReference type="AGR" id="HGNC:2455"/>
<dbReference type="CTD" id="1455"/>
<dbReference type="DisGeNET" id="1455"/>
<dbReference type="GeneCards" id="CSNK1G2"/>
<dbReference type="HGNC" id="HGNC:2455">
    <property type="gene designation" value="CSNK1G2"/>
</dbReference>
<dbReference type="HPA" id="ENSG00000133275">
    <property type="expression patterns" value="Low tissue specificity"/>
</dbReference>
<dbReference type="MIM" id="602214">
    <property type="type" value="gene"/>
</dbReference>
<dbReference type="neXtProt" id="NX_P78368"/>
<dbReference type="OpenTargets" id="ENSG00000133275"/>
<dbReference type="PharmGKB" id="PA26955"/>
<dbReference type="VEuPathDB" id="HostDB:ENSG00000133275"/>
<dbReference type="eggNOG" id="KOG1165">
    <property type="taxonomic scope" value="Eukaryota"/>
</dbReference>
<dbReference type="GeneTree" id="ENSGT00940000156470"/>
<dbReference type="InParanoid" id="P78368"/>
<dbReference type="OMA" id="EFDWTHK"/>
<dbReference type="OrthoDB" id="5800476at2759"/>
<dbReference type="PAN-GO" id="P78368">
    <property type="GO annotations" value="8 GO annotations based on evolutionary models"/>
</dbReference>
<dbReference type="PhylomeDB" id="P78368"/>
<dbReference type="TreeFam" id="TF313349"/>
<dbReference type="BRENDA" id="2.7.11.1">
    <property type="organism ID" value="2681"/>
</dbReference>
<dbReference type="PathwayCommons" id="P78368"/>
<dbReference type="Reactome" id="R-HSA-1660661">
    <property type="pathway name" value="Sphingolipid de novo biosynthesis"/>
</dbReference>
<dbReference type="Reactome" id="R-HSA-4641262">
    <property type="pathway name" value="Disassembly of the destruction complex and recruitment of AXIN to the membrane"/>
</dbReference>
<dbReference type="SignaLink" id="P78368"/>
<dbReference type="SIGNOR" id="P78368"/>
<dbReference type="BioGRID-ORCS" id="1455">
    <property type="hits" value="24 hits in 1195 CRISPR screens"/>
</dbReference>
<dbReference type="ChiTaRS" id="CSNK1G2">
    <property type="organism name" value="human"/>
</dbReference>
<dbReference type="EvolutionaryTrace" id="P78368"/>
<dbReference type="GenomeRNAi" id="1455"/>
<dbReference type="Pharos" id="P78368">
    <property type="development level" value="Tchem"/>
</dbReference>
<dbReference type="PRO" id="PR:P78368"/>
<dbReference type="Proteomes" id="UP000005640">
    <property type="component" value="Chromosome 19"/>
</dbReference>
<dbReference type="RNAct" id="P78368">
    <property type="molecule type" value="protein"/>
</dbReference>
<dbReference type="Bgee" id="ENSG00000133275">
    <property type="expression patterns" value="Expressed in left testis and 202 other cell types or tissues"/>
</dbReference>
<dbReference type="ExpressionAtlas" id="P78368">
    <property type="expression patterns" value="baseline and differential"/>
</dbReference>
<dbReference type="GO" id="GO:0005938">
    <property type="term" value="C:cell cortex"/>
    <property type="evidence" value="ECO:0007669"/>
    <property type="project" value="UniProtKB-SubCell"/>
</dbReference>
<dbReference type="GO" id="GO:0005737">
    <property type="term" value="C:cytoplasm"/>
    <property type="evidence" value="ECO:0000318"/>
    <property type="project" value="GO_Central"/>
</dbReference>
<dbReference type="GO" id="GO:0005829">
    <property type="term" value="C:cytosol"/>
    <property type="evidence" value="ECO:0000304"/>
    <property type="project" value="Reactome"/>
</dbReference>
<dbReference type="GO" id="GO:0016020">
    <property type="term" value="C:membrane"/>
    <property type="evidence" value="ECO:0007005"/>
    <property type="project" value="UniProtKB"/>
</dbReference>
<dbReference type="GO" id="GO:0005634">
    <property type="term" value="C:nucleus"/>
    <property type="evidence" value="ECO:0000318"/>
    <property type="project" value="GO_Central"/>
</dbReference>
<dbReference type="GO" id="GO:0005886">
    <property type="term" value="C:plasma membrane"/>
    <property type="evidence" value="ECO:0000318"/>
    <property type="project" value="GO_Central"/>
</dbReference>
<dbReference type="GO" id="GO:0005524">
    <property type="term" value="F:ATP binding"/>
    <property type="evidence" value="ECO:0007669"/>
    <property type="project" value="UniProtKB-KW"/>
</dbReference>
<dbReference type="GO" id="GO:0106310">
    <property type="term" value="F:protein serine kinase activity"/>
    <property type="evidence" value="ECO:0007669"/>
    <property type="project" value="RHEA"/>
</dbReference>
<dbReference type="GO" id="GO:0004674">
    <property type="term" value="F:protein serine/threonine kinase activity"/>
    <property type="evidence" value="ECO:0000314"/>
    <property type="project" value="ParkinsonsUK-UCL"/>
</dbReference>
<dbReference type="GO" id="GO:0006897">
    <property type="term" value="P:endocytosis"/>
    <property type="evidence" value="ECO:0000318"/>
    <property type="project" value="GO_Central"/>
</dbReference>
<dbReference type="GO" id="GO:0090263">
    <property type="term" value="P:positive regulation of canonical Wnt signaling pathway"/>
    <property type="evidence" value="ECO:0000318"/>
    <property type="project" value="GO_Central"/>
</dbReference>
<dbReference type="GO" id="GO:0006468">
    <property type="term" value="P:protein phosphorylation"/>
    <property type="evidence" value="ECO:0000304"/>
    <property type="project" value="ProtInc"/>
</dbReference>
<dbReference type="GO" id="GO:0007165">
    <property type="term" value="P:signal transduction"/>
    <property type="evidence" value="ECO:0000318"/>
    <property type="project" value="GO_Central"/>
</dbReference>
<dbReference type="GO" id="GO:0030148">
    <property type="term" value="P:sphingolipid biosynthetic process"/>
    <property type="evidence" value="ECO:0000304"/>
    <property type="project" value="Reactome"/>
</dbReference>
<dbReference type="GO" id="GO:0016055">
    <property type="term" value="P:Wnt signaling pathway"/>
    <property type="evidence" value="ECO:0007669"/>
    <property type="project" value="UniProtKB-KW"/>
</dbReference>
<dbReference type="CDD" id="cd14126">
    <property type="entry name" value="STKc_CK1_gamma"/>
    <property type="match status" value="1"/>
</dbReference>
<dbReference type="FunFam" id="1.10.510.10:FF:001113">
    <property type="entry name" value="Casein kinase 1 gamma 2"/>
    <property type="match status" value="1"/>
</dbReference>
<dbReference type="FunFam" id="3.30.200.20:FF:000018">
    <property type="entry name" value="Casein kinase I isoform gamma-1"/>
    <property type="match status" value="1"/>
</dbReference>
<dbReference type="Gene3D" id="3.30.200.20">
    <property type="entry name" value="Phosphorylase Kinase, domain 1"/>
    <property type="match status" value="1"/>
</dbReference>
<dbReference type="Gene3D" id="1.10.510.10">
    <property type="entry name" value="Transferase(Phosphotransferase) domain 1"/>
    <property type="match status" value="1"/>
</dbReference>
<dbReference type="InterPro" id="IPR022247">
    <property type="entry name" value="Casein_kinase-1_gamma_C"/>
</dbReference>
<dbReference type="InterPro" id="IPR050235">
    <property type="entry name" value="CK1_Ser-Thr_kinase"/>
</dbReference>
<dbReference type="InterPro" id="IPR011009">
    <property type="entry name" value="Kinase-like_dom_sf"/>
</dbReference>
<dbReference type="InterPro" id="IPR000719">
    <property type="entry name" value="Prot_kinase_dom"/>
</dbReference>
<dbReference type="InterPro" id="IPR017441">
    <property type="entry name" value="Protein_kinase_ATP_BS"/>
</dbReference>
<dbReference type="InterPro" id="IPR008271">
    <property type="entry name" value="Ser/Thr_kinase_AS"/>
</dbReference>
<dbReference type="PANTHER" id="PTHR11909">
    <property type="entry name" value="CASEIN KINASE-RELATED"/>
    <property type="match status" value="1"/>
</dbReference>
<dbReference type="Pfam" id="PF12605">
    <property type="entry name" value="CK1gamma_C"/>
    <property type="match status" value="1"/>
</dbReference>
<dbReference type="Pfam" id="PF00069">
    <property type="entry name" value="Pkinase"/>
    <property type="match status" value="1"/>
</dbReference>
<dbReference type="SMART" id="SM00220">
    <property type="entry name" value="S_TKc"/>
    <property type="match status" value="1"/>
</dbReference>
<dbReference type="SUPFAM" id="SSF56112">
    <property type="entry name" value="Protein kinase-like (PK-like)"/>
    <property type="match status" value="1"/>
</dbReference>
<dbReference type="PROSITE" id="PS00107">
    <property type="entry name" value="PROTEIN_KINASE_ATP"/>
    <property type="match status" value="1"/>
</dbReference>
<dbReference type="PROSITE" id="PS50011">
    <property type="entry name" value="PROTEIN_KINASE_DOM"/>
    <property type="match status" value="1"/>
</dbReference>
<dbReference type="PROSITE" id="PS00108">
    <property type="entry name" value="PROTEIN_KINASE_ST"/>
    <property type="match status" value="1"/>
</dbReference>
<sequence>MDFDKKGGKGETEEGRRMSKAGGGRSSHGIRSSGTSSGVLMVGPNFRVGKKIGCGNFGELRLGKNLYTNEYVAIKLEPIKSRAPQLHLEYRFYKQLSATEGVPQVYYFGPCGKYNAMVLELLGPSLEDLFDLCDRTFTLKTVLMIAIQLITRMEYVHTKSLIYRDVKPENFLVGRPGTKRQHAIHIIDFGLAKEYIDPETKKHIPYREHKSLTGTARYMSINTHLGKEQSRRDDLEALGHMFMYFLRGSLPWQGLKADTLKERYQKIGDTKRATPIEVLCENFPEEMATYLRYVRRLDFFEKPDYDYLRKLFTDLFDRSGFVFDYEYDWAGKPLPTPIGTVHTDLPSQPQLRDKTQPHSKNQALNSTNGELNADDPTAGHSNAPITAPAEVEVADETKCCCFFKRRKRKSLQRHK</sequence>
<protein>
    <recommendedName>
        <fullName>Casein kinase I isoform gamma-2</fullName>
        <shortName>CKI-gamma 2</shortName>
        <ecNumber>2.7.11.1</ecNumber>
    </recommendedName>
</protein>
<evidence type="ECO:0000250" key="1">
    <source>
        <dbReference type="UniProtKB" id="P48729"/>
    </source>
</evidence>
<evidence type="ECO:0000250" key="2">
    <source>
        <dbReference type="UniProtKB" id="P48730"/>
    </source>
</evidence>
<evidence type="ECO:0000250" key="3">
    <source>
        <dbReference type="UniProtKB" id="Q8BVP5"/>
    </source>
</evidence>
<evidence type="ECO:0000255" key="4">
    <source>
        <dbReference type="PROSITE-ProRule" id="PRU00159"/>
    </source>
</evidence>
<evidence type="ECO:0000255" key="5">
    <source>
        <dbReference type="PROSITE-ProRule" id="PRU10027"/>
    </source>
</evidence>
<evidence type="ECO:0000256" key="6">
    <source>
        <dbReference type="SAM" id="MobiDB-lite"/>
    </source>
</evidence>
<evidence type="ECO:0000269" key="7">
    <source>
    </source>
</evidence>
<evidence type="ECO:0000269" key="8">
    <source>
    </source>
</evidence>
<evidence type="ECO:0000269" key="9">
    <source>
    </source>
</evidence>
<evidence type="ECO:0000269" key="10">
    <source>
    </source>
</evidence>
<evidence type="ECO:0000269" key="11">
    <source>
    </source>
</evidence>
<evidence type="ECO:0000269" key="12">
    <source>
    </source>
</evidence>
<evidence type="ECO:0000269" key="13">
    <source>
    </source>
</evidence>
<evidence type="ECO:0000269" key="14">
    <source>
    </source>
</evidence>
<evidence type="ECO:0000305" key="15"/>
<evidence type="ECO:0007829" key="16">
    <source>
        <dbReference type="PDB" id="2C47"/>
    </source>
</evidence>
<accession>P78368</accession>
<accession>B5BU42</accession>
<accession>O00704</accession>
<accession>Q8WUB1</accession>
<keyword id="KW-0002">3D-structure</keyword>
<keyword id="KW-0067">ATP-binding</keyword>
<keyword id="KW-0963">Cytoplasm</keyword>
<keyword id="KW-0418">Kinase</keyword>
<keyword id="KW-0547">Nucleotide-binding</keyword>
<keyword id="KW-0597">Phosphoprotein</keyword>
<keyword id="KW-1267">Proteomics identification</keyword>
<keyword id="KW-1185">Reference proteome</keyword>
<keyword id="KW-0723">Serine/threonine-protein kinase</keyword>
<keyword id="KW-0808">Transferase</keyword>
<keyword id="KW-0879">Wnt signaling pathway</keyword>
<organism>
    <name type="scientific">Homo sapiens</name>
    <name type="common">Human</name>
    <dbReference type="NCBI Taxonomy" id="9606"/>
    <lineage>
        <taxon>Eukaryota</taxon>
        <taxon>Metazoa</taxon>
        <taxon>Chordata</taxon>
        <taxon>Craniata</taxon>
        <taxon>Vertebrata</taxon>
        <taxon>Euteleostomi</taxon>
        <taxon>Mammalia</taxon>
        <taxon>Eutheria</taxon>
        <taxon>Euarchontoglires</taxon>
        <taxon>Primates</taxon>
        <taxon>Haplorrhini</taxon>
        <taxon>Catarrhini</taxon>
        <taxon>Hominidae</taxon>
        <taxon>Homo</taxon>
    </lineage>
</organism>
<name>KC1G2_HUMAN</name>
<reference key="1">
    <citation type="journal article" date="1997" name="Genomics">
        <title>Cloning and chromosomal mapping of human casein kinase I gamma 2 (CSNK1G2).</title>
        <authorList>
            <person name="Kitabayashi A.N."/>
            <person name="Kusuda J."/>
            <person name="Hirai M."/>
            <person name="Hashimoto K."/>
        </authorList>
    </citation>
    <scope>NUCLEOTIDE SEQUENCE [MRNA]</scope>
    <scope>TISSUE SPECIFICITY</scope>
    <source>
        <tissue>Testis</tissue>
    </source>
</reference>
<reference key="2">
    <citation type="submission" date="2003-08" db="EMBL/GenBank/DDBJ databases">
        <title>Cloning of human full-length CDSs in BD Creator(TM) system donor vector.</title>
        <authorList>
            <person name="Kalnine N."/>
            <person name="Chen X."/>
            <person name="Rolfs A."/>
            <person name="Halleck A."/>
            <person name="Hines L."/>
            <person name="Eisenstein S."/>
            <person name="Koundinya M."/>
            <person name="Raphael J."/>
            <person name="Moreira D."/>
            <person name="Kelley T."/>
            <person name="LaBaer J."/>
            <person name="Lin Y."/>
            <person name="Phelan M."/>
            <person name="Farmer A."/>
        </authorList>
    </citation>
    <scope>NUCLEOTIDE SEQUENCE [LARGE SCALE MRNA]</scope>
</reference>
<reference key="3">
    <citation type="journal article" date="2008" name="Nat. Methods">
        <title>Human protein factory for converting the transcriptome into an in vitro-expressed proteome.</title>
        <authorList>
            <person name="Goshima N."/>
            <person name="Kawamura Y."/>
            <person name="Fukumoto A."/>
            <person name="Miura A."/>
            <person name="Honma R."/>
            <person name="Satoh R."/>
            <person name="Wakamatsu A."/>
            <person name="Yamamoto J."/>
            <person name="Kimura K."/>
            <person name="Nishikawa T."/>
            <person name="Andoh T."/>
            <person name="Iida Y."/>
            <person name="Ishikawa K."/>
            <person name="Ito E."/>
            <person name="Kagawa N."/>
            <person name="Kaminaga C."/>
            <person name="Kanehori K."/>
            <person name="Kawakami B."/>
            <person name="Kenmochi K."/>
            <person name="Kimura R."/>
            <person name="Kobayashi M."/>
            <person name="Kuroita T."/>
            <person name="Kuwayama H."/>
            <person name="Maruyama Y."/>
            <person name="Matsuo K."/>
            <person name="Minami K."/>
            <person name="Mitsubori M."/>
            <person name="Mori M."/>
            <person name="Morishita R."/>
            <person name="Murase A."/>
            <person name="Nishikawa A."/>
            <person name="Nishikawa S."/>
            <person name="Okamoto T."/>
            <person name="Sakagami N."/>
            <person name="Sakamoto Y."/>
            <person name="Sasaki Y."/>
            <person name="Seki T."/>
            <person name="Sono S."/>
            <person name="Sugiyama A."/>
            <person name="Sumiya T."/>
            <person name="Takayama T."/>
            <person name="Takayama Y."/>
            <person name="Takeda H."/>
            <person name="Togashi T."/>
            <person name="Yahata K."/>
            <person name="Yamada H."/>
            <person name="Yanagisawa Y."/>
            <person name="Endo Y."/>
            <person name="Imamoto F."/>
            <person name="Kisu Y."/>
            <person name="Tanaka S."/>
            <person name="Isogai T."/>
            <person name="Imai J."/>
            <person name="Watanabe S."/>
            <person name="Nomura N."/>
        </authorList>
    </citation>
    <scope>NUCLEOTIDE SEQUENCE [LARGE SCALE MRNA]</scope>
</reference>
<reference key="4">
    <citation type="journal article" date="2004" name="Nature">
        <title>The DNA sequence and biology of human chromosome 19.</title>
        <authorList>
            <person name="Grimwood J."/>
            <person name="Gordon L.A."/>
            <person name="Olsen A.S."/>
            <person name="Terry A."/>
            <person name="Schmutz J."/>
            <person name="Lamerdin J.E."/>
            <person name="Hellsten U."/>
            <person name="Goodstein D."/>
            <person name="Couronne O."/>
            <person name="Tran-Gyamfi M."/>
            <person name="Aerts A."/>
            <person name="Altherr M."/>
            <person name="Ashworth L."/>
            <person name="Bajorek E."/>
            <person name="Black S."/>
            <person name="Branscomb E."/>
            <person name="Caenepeel S."/>
            <person name="Carrano A.V."/>
            <person name="Caoile C."/>
            <person name="Chan Y.M."/>
            <person name="Christensen M."/>
            <person name="Cleland C.A."/>
            <person name="Copeland A."/>
            <person name="Dalin E."/>
            <person name="Dehal P."/>
            <person name="Denys M."/>
            <person name="Detter J.C."/>
            <person name="Escobar J."/>
            <person name="Flowers D."/>
            <person name="Fotopulos D."/>
            <person name="Garcia C."/>
            <person name="Georgescu A.M."/>
            <person name="Glavina T."/>
            <person name="Gomez M."/>
            <person name="Gonzales E."/>
            <person name="Groza M."/>
            <person name="Hammon N."/>
            <person name="Hawkins T."/>
            <person name="Haydu L."/>
            <person name="Ho I."/>
            <person name="Huang W."/>
            <person name="Israni S."/>
            <person name="Jett J."/>
            <person name="Kadner K."/>
            <person name="Kimball H."/>
            <person name="Kobayashi A."/>
            <person name="Larionov V."/>
            <person name="Leem S.-H."/>
            <person name="Lopez F."/>
            <person name="Lou Y."/>
            <person name="Lowry S."/>
            <person name="Malfatti S."/>
            <person name="Martinez D."/>
            <person name="McCready P.M."/>
            <person name="Medina C."/>
            <person name="Morgan J."/>
            <person name="Nelson K."/>
            <person name="Nolan M."/>
            <person name="Ovcharenko I."/>
            <person name="Pitluck S."/>
            <person name="Pollard M."/>
            <person name="Popkie A.P."/>
            <person name="Predki P."/>
            <person name="Quan G."/>
            <person name="Ramirez L."/>
            <person name="Rash S."/>
            <person name="Retterer J."/>
            <person name="Rodriguez A."/>
            <person name="Rogers S."/>
            <person name="Salamov A."/>
            <person name="Salazar A."/>
            <person name="She X."/>
            <person name="Smith D."/>
            <person name="Slezak T."/>
            <person name="Solovyev V."/>
            <person name="Thayer N."/>
            <person name="Tice H."/>
            <person name="Tsai M."/>
            <person name="Ustaszewska A."/>
            <person name="Vo N."/>
            <person name="Wagner M."/>
            <person name="Wheeler J."/>
            <person name="Wu K."/>
            <person name="Xie G."/>
            <person name="Yang J."/>
            <person name="Dubchak I."/>
            <person name="Furey T.S."/>
            <person name="DeJong P."/>
            <person name="Dickson M."/>
            <person name="Gordon D."/>
            <person name="Eichler E.E."/>
            <person name="Pennacchio L.A."/>
            <person name="Richardson P."/>
            <person name="Stubbs L."/>
            <person name="Rokhsar D.S."/>
            <person name="Myers R.M."/>
            <person name="Rubin E.M."/>
            <person name="Lucas S.M."/>
        </authorList>
    </citation>
    <scope>NUCLEOTIDE SEQUENCE [LARGE SCALE GENOMIC DNA]</scope>
</reference>
<reference key="5">
    <citation type="submission" date="2005-09" db="EMBL/GenBank/DDBJ databases">
        <authorList>
            <person name="Mural R.J."/>
            <person name="Istrail S."/>
            <person name="Sutton G.G."/>
            <person name="Florea L."/>
            <person name="Halpern A.L."/>
            <person name="Mobarry C.M."/>
            <person name="Lippert R."/>
            <person name="Walenz B."/>
            <person name="Shatkay H."/>
            <person name="Dew I."/>
            <person name="Miller J.R."/>
            <person name="Flanigan M.J."/>
            <person name="Edwards N.J."/>
            <person name="Bolanos R."/>
            <person name="Fasulo D."/>
            <person name="Halldorsson B.V."/>
            <person name="Hannenhalli S."/>
            <person name="Turner R."/>
            <person name="Yooseph S."/>
            <person name="Lu F."/>
            <person name="Nusskern D.R."/>
            <person name="Shue B.C."/>
            <person name="Zheng X.H."/>
            <person name="Zhong F."/>
            <person name="Delcher A.L."/>
            <person name="Huson D.H."/>
            <person name="Kravitz S.A."/>
            <person name="Mouchard L."/>
            <person name="Reinert K."/>
            <person name="Remington K.A."/>
            <person name="Clark A.G."/>
            <person name="Waterman M.S."/>
            <person name="Eichler E.E."/>
            <person name="Adams M.D."/>
            <person name="Hunkapiller M.W."/>
            <person name="Myers E.W."/>
            <person name="Venter J.C."/>
        </authorList>
    </citation>
    <scope>NUCLEOTIDE SEQUENCE [LARGE SCALE GENOMIC DNA]</scope>
</reference>
<reference key="6">
    <citation type="journal article" date="2004" name="Genome Res.">
        <title>The status, quality, and expansion of the NIH full-length cDNA project: the Mammalian Gene Collection (MGC).</title>
        <authorList>
            <consortium name="The MGC Project Team"/>
        </authorList>
    </citation>
    <scope>NUCLEOTIDE SEQUENCE [LARGE SCALE MRNA]</scope>
    <source>
        <tissue>Colon</tissue>
        <tissue>Muscle</tissue>
    </source>
</reference>
<reference key="7">
    <citation type="journal article" date="2004" name="Oncogene">
        <title>Metastatic tumor antigen 1 short form (MTA1s) associates with casein kinase I-gamma2, an estrogen-responsive kinase.</title>
        <authorList>
            <person name="Mishra S.K."/>
            <person name="Yang Z."/>
            <person name="Mazumdar A."/>
            <person name="Talukder A.H."/>
            <person name="Larose L."/>
            <person name="Kumar R."/>
        </authorList>
    </citation>
    <scope>FUNCTION AS MTA1 KINASE</scope>
    <scope>INTERACTION WITH MTA1</scope>
    <scope>SUBCELLULAR LOCATION</scope>
    <scope>ACTIVITY REGULATION</scope>
</reference>
<reference key="8">
    <citation type="journal article" date="2005" name="J. Biol. Chem.">
        <title>SCFbeta-TRCP controls clock-dependent transcription via casein kinase 1-dependent degradation of the mammalian period-1 (Per1) protein.</title>
        <authorList>
            <person name="Shirogane T."/>
            <person name="Jin J."/>
            <person name="Ang X.L."/>
            <person name="Harper J.W."/>
        </authorList>
    </citation>
    <scope>FUNCTION IN PER1 STABILITY</scope>
</reference>
<reference key="9">
    <citation type="journal article" date="2008" name="Mol. Cell">
        <title>Kinase-selective enrichment enables quantitative phosphoproteomics of the kinome across the cell cycle.</title>
        <authorList>
            <person name="Daub H."/>
            <person name="Olsen J.V."/>
            <person name="Bairlein M."/>
            <person name="Gnad F."/>
            <person name="Oppermann F.S."/>
            <person name="Korner R."/>
            <person name="Greff Z."/>
            <person name="Keri G."/>
            <person name="Stemmann O."/>
            <person name="Mann M."/>
        </authorList>
    </citation>
    <scope>IDENTIFICATION BY MASS SPECTROMETRY [LARGE SCALE ANALYSIS]</scope>
    <source>
        <tissue>Cervix carcinoma</tissue>
    </source>
</reference>
<reference key="10">
    <citation type="journal article" date="2008" name="Oncogene">
        <title>Ligand-dependent ubiquitination of Smad3 is regulated by casein kinase 1 gamma 2, an inhibitor of TGF-beta signaling.</title>
        <authorList>
            <person name="Guo X."/>
            <person name="Waddell D.S."/>
            <person name="Wang W."/>
            <person name="Wang Z."/>
            <person name="Liberati N.T."/>
            <person name="Yong S."/>
            <person name="Liu X."/>
            <person name="Wang X.-F."/>
        </authorList>
    </citation>
    <scope>FUNCTION AS SMAD3 KINASE</scope>
    <scope>INTERACTION WITH SMAD3</scope>
    <scope>PHOSPHORYLATION</scope>
</reference>
<reference key="11">
    <citation type="journal article" date="2009" name="Mol. Biol. Cell">
        <title>Casein kinase I{gamma}2 down-regulates trafficking of ceramide in the synthesis of sphingomyelin.</title>
        <authorList>
            <person name="Tomishige N."/>
            <person name="Kumagai K."/>
            <person name="Kusuda J."/>
            <person name="Nishijima M."/>
            <person name="Hanada K."/>
        </authorList>
    </citation>
    <scope>FUNCTION AS COL4A3BP/CERT KINASE</scope>
</reference>
<reference key="12">
    <citation type="journal article" date="2009" name="Mol. Cell. Proteomics">
        <title>Large-scale proteomics analysis of the human kinome.</title>
        <authorList>
            <person name="Oppermann F.S."/>
            <person name="Gnad F."/>
            <person name="Olsen J.V."/>
            <person name="Hornberger R."/>
            <person name="Greff Z."/>
            <person name="Keri G."/>
            <person name="Mann M."/>
            <person name="Daub H."/>
        </authorList>
    </citation>
    <scope>IDENTIFICATION BY MASS SPECTROMETRY [LARGE SCALE ANALYSIS]</scope>
</reference>
<reference key="13">
    <citation type="journal article" date="2009" name="Sci. Signal.">
        <title>Quantitative phosphoproteomic analysis of T cell receptor signaling reveals system-wide modulation of protein-protein interactions.</title>
        <authorList>
            <person name="Mayya V."/>
            <person name="Lundgren D.H."/>
            <person name="Hwang S.-I."/>
            <person name="Rezaul K."/>
            <person name="Wu L."/>
            <person name="Eng J.K."/>
            <person name="Rodionov V."/>
            <person name="Han D.K."/>
        </authorList>
    </citation>
    <scope>IDENTIFICATION BY MASS SPECTROMETRY [LARGE SCALE ANALYSIS]</scope>
    <source>
        <tissue>Leukemic T-cell</tissue>
    </source>
</reference>
<reference key="14">
    <citation type="journal article" date="2013" name="J. Proteome Res.">
        <title>Toward a comprehensive characterization of a human cancer cell phosphoproteome.</title>
        <authorList>
            <person name="Zhou H."/>
            <person name="Di Palma S."/>
            <person name="Preisinger C."/>
            <person name="Peng M."/>
            <person name="Polat A.N."/>
            <person name="Heck A.J."/>
            <person name="Mohammed S."/>
        </authorList>
    </citation>
    <scope>IDENTIFICATION BY MASS SPECTROMETRY [LARGE SCALE ANALYSIS]</scope>
    <source>
        <tissue>Cervix carcinoma</tissue>
        <tissue>Erythroleukemia</tissue>
    </source>
</reference>
<reference key="15">
    <citation type="journal article" date="2015" name="Dev. Cell">
        <title>Establishment of Par-Polarized Cortical Domains via Phosphoregulated Membrane Motifs.</title>
        <authorList>
            <person name="Bailey M.J."/>
            <person name="Prehoda K.E."/>
        </authorList>
    </citation>
    <scope>SUBCELLULAR LOCATION</scope>
    <scope>DOMAIN</scope>
    <scope>PHOSPHORYLATION</scope>
</reference>
<reference key="16">
    <citation type="journal article" date="2023" name="PLoS Genet.">
        <title>Casein kinase 1 gamma regulates oxidative stress response via interacting with the NADPH dual oxidase complex.</title>
        <authorList>
            <person name="Hu Y."/>
            <person name="Xu Z."/>
            <person name="Pan Q."/>
            <person name="Ma L."/>
        </authorList>
    </citation>
    <scope>FUNCTION</scope>
    <scope>INTERACTION WITH DUOXA2</scope>
</reference>
<reference key="17">
    <citation type="submission" date="2011-07" db="PDB data bank">
        <title>The structure of casein kinase 1 gamma 2.</title>
        <authorList>
            <person name="Bunkoczi G."/>
            <person name="Rellos P."/>
            <person name="Das S."/>
            <person name="Ugochukwu E."/>
            <person name="Fedorov O."/>
            <person name="Sobott F."/>
            <person name="Eswaran J."/>
            <person name="Amos A."/>
            <person name="Ball L."/>
            <person name="Von Delft F."/>
            <person name="Bullock A."/>
            <person name="Debreczeni J."/>
            <person name="Turnbull A."/>
            <person name="Sundstrom M."/>
            <person name="Weigelt J."/>
            <person name="Arrowsmith C."/>
            <person name="Edwards A."/>
            <person name="Knapp S."/>
        </authorList>
    </citation>
    <scope>X-RAY CRYSTALLOGRAPHY (2.40 ANGSTROMS) OF 43-353 IN COMPLEX WITH 5-IODOTUBERCIDIN</scope>
</reference>
<reference key="18">
    <citation type="journal article" date="2007" name="Nature">
        <title>Patterns of somatic mutation in human cancer genomes.</title>
        <authorList>
            <person name="Greenman C."/>
            <person name="Stephens P."/>
            <person name="Smith R."/>
            <person name="Dalgliesh G.L."/>
            <person name="Hunter C."/>
            <person name="Bignell G."/>
            <person name="Davies H."/>
            <person name="Teague J."/>
            <person name="Butler A."/>
            <person name="Stevens C."/>
            <person name="Edkins S."/>
            <person name="O'Meara S."/>
            <person name="Vastrik I."/>
            <person name="Schmidt E.E."/>
            <person name="Avis T."/>
            <person name="Barthorpe S."/>
            <person name="Bhamra G."/>
            <person name="Buck G."/>
            <person name="Choudhury B."/>
            <person name="Clements J."/>
            <person name="Cole J."/>
            <person name="Dicks E."/>
            <person name="Forbes S."/>
            <person name="Gray K."/>
            <person name="Halliday K."/>
            <person name="Harrison R."/>
            <person name="Hills K."/>
            <person name="Hinton J."/>
            <person name="Jenkinson A."/>
            <person name="Jones D."/>
            <person name="Menzies A."/>
            <person name="Mironenko T."/>
            <person name="Perry J."/>
            <person name="Raine K."/>
            <person name="Richardson D."/>
            <person name="Shepherd R."/>
            <person name="Small A."/>
            <person name="Tofts C."/>
            <person name="Varian J."/>
            <person name="Webb T."/>
            <person name="West S."/>
            <person name="Widaa S."/>
            <person name="Yates A."/>
            <person name="Cahill D.P."/>
            <person name="Louis D.N."/>
            <person name="Goldstraw P."/>
            <person name="Nicholson A.G."/>
            <person name="Brasseur F."/>
            <person name="Looijenga L."/>
            <person name="Weber B.L."/>
            <person name="Chiew Y.-E."/>
            <person name="DeFazio A."/>
            <person name="Greaves M.F."/>
            <person name="Green A.R."/>
            <person name="Campbell P."/>
            <person name="Birney E."/>
            <person name="Easton D.F."/>
            <person name="Chenevix-Trench G."/>
            <person name="Tan M.-H."/>
            <person name="Khoo S.K."/>
            <person name="Teh B.T."/>
            <person name="Yuen S.T."/>
            <person name="Leung S.Y."/>
            <person name="Wooster R."/>
            <person name="Futreal P.A."/>
            <person name="Stratton M.R."/>
        </authorList>
    </citation>
    <scope>VARIANTS [LARGE SCALE ANALYSIS] LEU-189; GLY-194; THR-196; CYS-206; HIS-206; SER-207; GLN-208; CYS-217 AND MET-223</scope>
</reference>